<reference key="1">
    <citation type="journal article" date="1990" name="Nucleic Acids Res.">
        <title>Sequence of the gene encoding the ATP synthase beta subunit from alkaliphilic Bacillus firmus RAB.</title>
        <authorList>
            <person name="Ivey D.M."/>
            <person name="Krulwich T.A."/>
        </authorList>
    </citation>
    <scope>NUCLEOTIDE SEQUENCE [GENOMIC DNA]</scope>
    <source>
        <strain>RAB</strain>
    </source>
</reference>
<organism>
    <name type="scientific">Cytobacillus firmus</name>
    <name type="common">Bacillus firmus</name>
    <dbReference type="NCBI Taxonomy" id="1399"/>
    <lineage>
        <taxon>Bacteria</taxon>
        <taxon>Bacillati</taxon>
        <taxon>Bacillota</taxon>
        <taxon>Bacilli</taxon>
        <taxon>Bacillales</taxon>
        <taxon>Bacillaceae</taxon>
        <taxon>Cytobacillus</taxon>
    </lineage>
</organism>
<comment type="function">
    <text evidence="1">Produces ATP from ADP in the presence of a proton gradient across the membrane. The catalytic sites are hosted primarily by the beta subunits.</text>
</comment>
<comment type="catalytic activity">
    <reaction evidence="1">
        <text>ATP + H2O + 4 H(+)(in) = ADP + phosphate + 5 H(+)(out)</text>
        <dbReference type="Rhea" id="RHEA:57720"/>
        <dbReference type="ChEBI" id="CHEBI:15377"/>
        <dbReference type="ChEBI" id="CHEBI:15378"/>
        <dbReference type="ChEBI" id="CHEBI:30616"/>
        <dbReference type="ChEBI" id="CHEBI:43474"/>
        <dbReference type="ChEBI" id="CHEBI:456216"/>
        <dbReference type="EC" id="7.1.2.2"/>
    </reaction>
</comment>
<comment type="subunit">
    <text evidence="1">F-type ATPases have 2 components, CF(1) - the catalytic core - and CF(0) - the membrane proton channel. CF(1) has five subunits: alpha(3), beta(3), gamma(1), delta(1), epsilon(1). CF(0) has three main subunits: a(1), b(2) and c(9-12). The alpha and beta chains form an alternating ring which encloses part of the gamma chain. CF(1) is attached to CF(0) by a central stalk formed by the gamma and epsilon chains, while a peripheral stalk is formed by the delta and b chains.</text>
</comment>
<comment type="subcellular location">
    <subcellularLocation>
        <location evidence="1">Cell membrane</location>
        <topology evidence="1">Peripheral membrane protein</topology>
    </subcellularLocation>
</comment>
<comment type="similarity">
    <text evidence="1">Belongs to the ATPase alpha/beta chains family.</text>
</comment>
<proteinExistence type="inferred from homology"/>
<gene>
    <name evidence="1" type="primary">atpD</name>
</gene>
<protein>
    <recommendedName>
        <fullName evidence="1">ATP synthase subunit beta</fullName>
        <ecNumber evidence="1">7.1.2.2</ecNumber>
    </recommendedName>
    <alternativeName>
        <fullName evidence="1">ATP synthase F1 sector subunit beta</fullName>
    </alternativeName>
    <alternativeName>
        <fullName evidence="1">F-ATPase subunit beta</fullName>
    </alternativeName>
</protein>
<name>ATPB_CYTFI</name>
<feature type="chain" id="PRO_0000144418" description="ATP synthase subunit beta">
    <location>
        <begin position="1"/>
        <end position="467"/>
    </location>
</feature>
<feature type="binding site" evidence="1">
    <location>
        <begin position="156"/>
        <end position="163"/>
    </location>
    <ligand>
        <name>ATP</name>
        <dbReference type="ChEBI" id="CHEBI:30616"/>
    </ligand>
</feature>
<feature type="sequence conflict" description="In Ref. 1; AAA22253." evidence="2" ref="1">
    <original>D</original>
    <variation>V</variation>
    <location>
        <position position="250"/>
    </location>
</feature>
<accession>P25075</accession>
<dbReference type="EC" id="7.1.2.2" evidence="1"/>
<dbReference type="EMBL" id="M31107">
    <property type="protein sequence ID" value="AAA22253.1"/>
    <property type="molecule type" value="Genomic_DNA"/>
</dbReference>
<dbReference type="PIR" id="S12743">
    <property type="entry name" value="PWBSBF"/>
</dbReference>
<dbReference type="SMR" id="P25075"/>
<dbReference type="STRING" id="1399.VL14_00765"/>
<dbReference type="GO" id="GO:0005886">
    <property type="term" value="C:plasma membrane"/>
    <property type="evidence" value="ECO:0007669"/>
    <property type="project" value="UniProtKB-SubCell"/>
</dbReference>
<dbReference type="GO" id="GO:0045259">
    <property type="term" value="C:proton-transporting ATP synthase complex"/>
    <property type="evidence" value="ECO:0007669"/>
    <property type="project" value="UniProtKB-KW"/>
</dbReference>
<dbReference type="GO" id="GO:0005524">
    <property type="term" value="F:ATP binding"/>
    <property type="evidence" value="ECO:0007669"/>
    <property type="project" value="UniProtKB-UniRule"/>
</dbReference>
<dbReference type="GO" id="GO:0016887">
    <property type="term" value="F:ATP hydrolysis activity"/>
    <property type="evidence" value="ECO:0007669"/>
    <property type="project" value="InterPro"/>
</dbReference>
<dbReference type="GO" id="GO:0046933">
    <property type="term" value="F:proton-transporting ATP synthase activity, rotational mechanism"/>
    <property type="evidence" value="ECO:0007669"/>
    <property type="project" value="UniProtKB-UniRule"/>
</dbReference>
<dbReference type="CDD" id="cd18110">
    <property type="entry name" value="ATP-synt_F1_beta_C"/>
    <property type="match status" value="1"/>
</dbReference>
<dbReference type="CDD" id="cd01133">
    <property type="entry name" value="F1-ATPase_beta_CD"/>
    <property type="match status" value="1"/>
</dbReference>
<dbReference type="FunFam" id="1.10.1140.10:FF:000001">
    <property type="entry name" value="ATP synthase subunit beta"/>
    <property type="match status" value="1"/>
</dbReference>
<dbReference type="FunFam" id="3.40.50.300:FF:000004">
    <property type="entry name" value="ATP synthase subunit beta"/>
    <property type="match status" value="1"/>
</dbReference>
<dbReference type="Gene3D" id="2.40.10.170">
    <property type="match status" value="1"/>
</dbReference>
<dbReference type="Gene3D" id="1.10.1140.10">
    <property type="entry name" value="Bovine Mitochondrial F1-atpase, Atp Synthase Beta Chain, Chain D, domain 3"/>
    <property type="match status" value="1"/>
</dbReference>
<dbReference type="Gene3D" id="3.40.50.300">
    <property type="entry name" value="P-loop containing nucleotide triphosphate hydrolases"/>
    <property type="match status" value="1"/>
</dbReference>
<dbReference type="HAMAP" id="MF_01347">
    <property type="entry name" value="ATP_synth_beta_bact"/>
    <property type="match status" value="1"/>
</dbReference>
<dbReference type="InterPro" id="IPR003593">
    <property type="entry name" value="AAA+_ATPase"/>
</dbReference>
<dbReference type="InterPro" id="IPR055190">
    <property type="entry name" value="ATP-synt_VA_C"/>
</dbReference>
<dbReference type="InterPro" id="IPR005722">
    <property type="entry name" value="ATP_synth_F1_bsu"/>
</dbReference>
<dbReference type="InterPro" id="IPR020003">
    <property type="entry name" value="ATPase_a/bsu_AS"/>
</dbReference>
<dbReference type="InterPro" id="IPR050053">
    <property type="entry name" value="ATPase_alpha/beta_chains"/>
</dbReference>
<dbReference type="InterPro" id="IPR004100">
    <property type="entry name" value="ATPase_F1/V1/A1_a/bsu_N"/>
</dbReference>
<dbReference type="InterPro" id="IPR036121">
    <property type="entry name" value="ATPase_F1/V1/A1_a/bsu_N_sf"/>
</dbReference>
<dbReference type="InterPro" id="IPR000194">
    <property type="entry name" value="ATPase_F1/V1/A1_a/bsu_nucl-bd"/>
</dbReference>
<dbReference type="InterPro" id="IPR024034">
    <property type="entry name" value="ATPase_F1/V1_b/a_C"/>
</dbReference>
<dbReference type="InterPro" id="IPR027417">
    <property type="entry name" value="P-loop_NTPase"/>
</dbReference>
<dbReference type="NCBIfam" id="TIGR01039">
    <property type="entry name" value="atpD"/>
    <property type="match status" value="1"/>
</dbReference>
<dbReference type="PANTHER" id="PTHR15184">
    <property type="entry name" value="ATP SYNTHASE"/>
    <property type="match status" value="1"/>
</dbReference>
<dbReference type="PANTHER" id="PTHR15184:SF71">
    <property type="entry name" value="ATP SYNTHASE SUBUNIT BETA, MITOCHONDRIAL"/>
    <property type="match status" value="1"/>
</dbReference>
<dbReference type="Pfam" id="PF00006">
    <property type="entry name" value="ATP-synt_ab"/>
    <property type="match status" value="1"/>
</dbReference>
<dbReference type="Pfam" id="PF02874">
    <property type="entry name" value="ATP-synt_ab_N"/>
    <property type="match status" value="1"/>
</dbReference>
<dbReference type="Pfam" id="PF22919">
    <property type="entry name" value="ATP-synt_VA_C"/>
    <property type="match status" value="1"/>
</dbReference>
<dbReference type="SMART" id="SM00382">
    <property type="entry name" value="AAA"/>
    <property type="match status" value="1"/>
</dbReference>
<dbReference type="SUPFAM" id="SSF47917">
    <property type="entry name" value="C-terminal domain of alpha and beta subunits of F1 ATP synthase"/>
    <property type="match status" value="1"/>
</dbReference>
<dbReference type="SUPFAM" id="SSF50615">
    <property type="entry name" value="N-terminal domain of alpha and beta subunits of F1 ATP synthase"/>
    <property type="match status" value="1"/>
</dbReference>
<dbReference type="SUPFAM" id="SSF52540">
    <property type="entry name" value="P-loop containing nucleoside triphosphate hydrolases"/>
    <property type="match status" value="1"/>
</dbReference>
<dbReference type="PROSITE" id="PS00152">
    <property type="entry name" value="ATPASE_ALPHA_BETA"/>
    <property type="match status" value="1"/>
</dbReference>
<sequence>MEYRSHISVMGPVVDVKFKSGQYPESINALKSTSRVRQNAVDVTVTLEVAIALGDDSVRTVAMGSTDGLYVYRGTDTGAPISVPVGEATLGRVFNVLGEAIDLGEPVAADDKRDPIHREAPKFEELSTTTEILETGIKVVDLLAPYIIGGKIGLFGGAGVGKTVLIQELINNIAQEHGVISVFAGVGERTREGNDLYHEMTDSGVIKKSAMVFGQMNEPPGARMAVALSGLTMAEHFRDRDGQDVLLFVDNISFTQAGSEVSALLGRMPSAVGYQPTLATEMGQLQERITSTKVGSVTSIQAIYVPADDYTDPAPATTFAHLDATTNLERKLSEMGIYPAVDPLASTSRALSPEIVGEEHYSVARQVQQTLQKYKELQDIIAILGMDELSEEDKLVVHRARRIQFFLSQNFHVAEQFTGQKGSYVPVKETIKGFKESLDGKYDDLPEDAFRLVGRIEEVIEKGKQTA</sequence>
<evidence type="ECO:0000255" key="1">
    <source>
        <dbReference type="HAMAP-Rule" id="MF_01347"/>
    </source>
</evidence>
<evidence type="ECO:0000305" key="2"/>
<keyword id="KW-0066">ATP synthesis</keyword>
<keyword id="KW-0067">ATP-binding</keyword>
<keyword id="KW-1003">Cell membrane</keyword>
<keyword id="KW-0139">CF(1)</keyword>
<keyword id="KW-0375">Hydrogen ion transport</keyword>
<keyword id="KW-0406">Ion transport</keyword>
<keyword id="KW-0472">Membrane</keyword>
<keyword id="KW-0547">Nucleotide-binding</keyword>
<keyword id="KW-1278">Translocase</keyword>
<keyword id="KW-0813">Transport</keyword>